<reference key="1">
    <citation type="journal article" date="2010" name="J. Bacteriol.">
        <title>Complete genome sequence of Beijerinckia indica subsp. indica.</title>
        <authorList>
            <person name="Tamas I."/>
            <person name="Dedysh S.N."/>
            <person name="Liesack W."/>
            <person name="Stott M.B."/>
            <person name="Alam M."/>
            <person name="Murrell J.C."/>
            <person name="Dunfield P.F."/>
        </authorList>
    </citation>
    <scope>NUCLEOTIDE SEQUENCE [LARGE SCALE GENOMIC DNA]</scope>
    <source>
        <strain>ATCC 9039 / DSM 1715 / NCIMB 8712</strain>
    </source>
</reference>
<evidence type="ECO:0000255" key="1">
    <source>
        <dbReference type="HAMAP-Rule" id="MF_01570"/>
    </source>
</evidence>
<keyword id="KW-0030">Aminoacyl-tRNA synthetase</keyword>
<keyword id="KW-0067">ATP-binding</keyword>
<keyword id="KW-0963">Cytoplasm</keyword>
<keyword id="KW-0436">Ligase</keyword>
<keyword id="KW-0547">Nucleotide-binding</keyword>
<keyword id="KW-0648">Protein biosynthesis</keyword>
<keyword id="KW-1185">Reference proteome</keyword>
<proteinExistence type="inferred from homology"/>
<feature type="chain" id="PRO_1000199448" description="Proline--tRNA ligase">
    <location>
        <begin position="1"/>
        <end position="439"/>
    </location>
</feature>
<gene>
    <name evidence="1" type="primary">proS</name>
    <name type="ordered locus">Bind_1797</name>
</gene>
<protein>
    <recommendedName>
        <fullName evidence="1">Proline--tRNA ligase</fullName>
        <ecNumber evidence="1">6.1.1.15</ecNumber>
    </recommendedName>
    <alternativeName>
        <fullName evidence="1">Prolyl-tRNA synthetase</fullName>
        <shortName evidence="1">ProRS</shortName>
    </alternativeName>
</protein>
<sequence length="439" mass="49716">MRLSRYFLPILRENPKEAEIVSHRLMLRAGMIRQEAAGIYAWLPLGFRVLQKVEQIVREEMDRAGAIELLMPTLQLADLWRETGRYDAYGPEMLRIKDRHERELLYGPTNEDMITEIFRAYVRSYRDLPKILYHIQWKFRDEQRPRFGVMRGREFLMKDAYSFDLDEEGARLSYNKMFVAYLRIYKRMGLTAIPMRAETGPIGGDLSHEFIILADTGESAVFCNKDVLDLPIPDEHTDYDGDLSPIIKQWTSLYAATEDVHDAARFESETPPEKRIERRGIEVGQVFYFGEKYSKPMRSLITGPDGSEKPFQGGSYGVGVSRLVGAIIEASHDEAGIIWPEAVAPFTVGLANLKVGDAATDAACAEIYERLEALGVDVLYDDTDDRPGGKFAKLDLIGLPYQIIVGPKGLAEGKIEMKTRATGARENLSIAAVIERFTT</sequence>
<name>SYP_BEII9</name>
<dbReference type="EC" id="6.1.1.15" evidence="1"/>
<dbReference type="EMBL" id="CP001016">
    <property type="protein sequence ID" value="ACB95425.1"/>
    <property type="molecule type" value="Genomic_DNA"/>
</dbReference>
<dbReference type="RefSeq" id="WP_012384782.1">
    <property type="nucleotide sequence ID" value="NC_010581.1"/>
</dbReference>
<dbReference type="SMR" id="B2IDI9"/>
<dbReference type="STRING" id="395963.Bind_1797"/>
<dbReference type="KEGG" id="bid:Bind_1797"/>
<dbReference type="eggNOG" id="COG0442">
    <property type="taxonomic scope" value="Bacteria"/>
</dbReference>
<dbReference type="HOGENOM" id="CLU_016739_4_2_5"/>
<dbReference type="OrthoDB" id="9809052at2"/>
<dbReference type="Proteomes" id="UP000001695">
    <property type="component" value="Chromosome"/>
</dbReference>
<dbReference type="GO" id="GO:0005829">
    <property type="term" value="C:cytosol"/>
    <property type="evidence" value="ECO:0007669"/>
    <property type="project" value="TreeGrafter"/>
</dbReference>
<dbReference type="GO" id="GO:0005524">
    <property type="term" value="F:ATP binding"/>
    <property type="evidence" value="ECO:0007669"/>
    <property type="project" value="UniProtKB-UniRule"/>
</dbReference>
<dbReference type="GO" id="GO:0004827">
    <property type="term" value="F:proline-tRNA ligase activity"/>
    <property type="evidence" value="ECO:0007669"/>
    <property type="project" value="UniProtKB-UniRule"/>
</dbReference>
<dbReference type="GO" id="GO:0006433">
    <property type="term" value="P:prolyl-tRNA aminoacylation"/>
    <property type="evidence" value="ECO:0007669"/>
    <property type="project" value="UniProtKB-UniRule"/>
</dbReference>
<dbReference type="CDD" id="cd00861">
    <property type="entry name" value="ProRS_anticodon_short"/>
    <property type="match status" value="1"/>
</dbReference>
<dbReference type="CDD" id="cd00779">
    <property type="entry name" value="ProRS_core_prok"/>
    <property type="match status" value="1"/>
</dbReference>
<dbReference type="FunFam" id="3.30.930.10:FF:000042">
    <property type="entry name" value="probable proline--tRNA ligase, mitochondrial"/>
    <property type="match status" value="1"/>
</dbReference>
<dbReference type="FunFam" id="3.40.50.800:FF:000032">
    <property type="entry name" value="Proline--tRNA ligase"/>
    <property type="match status" value="1"/>
</dbReference>
<dbReference type="Gene3D" id="3.40.50.800">
    <property type="entry name" value="Anticodon-binding domain"/>
    <property type="match status" value="1"/>
</dbReference>
<dbReference type="Gene3D" id="3.30.930.10">
    <property type="entry name" value="Bira Bifunctional Protein, Domain 2"/>
    <property type="match status" value="1"/>
</dbReference>
<dbReference type="HAMAP" id="MF_01570">
    <property type="entry name" value="Pro_tRNA_synth_type2"/>
    <property type="match status" value="1"/>
</dbReference>
<dbReference type="InterPro" id="IPR002314">
    <property type="entry name" value="aa-tRNA-synt_IIb"/>
</dbReference>
<dbReference type="InterPro" id="IPR006195">
    <property type="entry name" value="aa-tRNA-synth_II"/>
</dbReference>
<dbReference type="InterPro" id="IPR045864">
    <property type="entry name" value="aa-tRNA-synth_II/BPL/LPL"/>
</dbReference>
<dbReference type="InterPro" id="IPR004154">
    <property type="entry name" value="Anticodon-bd"/>
</dbReference>
<dbReference type="InterPro" id="IPR036621">
    <property type="entry name" value="Anticodon-bd_dom_sf"/>
</dbReference>
<dbReference type="InterPro" id="IPR002316">
    <property type="entry name" value="Pro-tRNA-ligase_IIa"/>
</dbReference>
<dbReference type="InterPro" id="IPR004500">
    <property type="entry name" value="Pro-tRNA-synth_IIa_bac-type"/>
</dbReference>
<dbReference type="InterPro" id="IPR050062">
    <property type="entry name" value="Pro-tRNA_synthetase"/>
</dbReference>
<dbReference type="InterPro" id="IPR023716">
    <property type="entry name" value="Prolyl-tRNA_ligase_IIa_type2"/>
</dbReference>
<dbReference type="InterPro" id="IPR044140">
    <property type="entry name" value="ProRS_anticodon_short"/>
</dbReference>
<dbReference type="InterPro" id="IPR033730">
    <property type="entry name" value="ProRS_core_prok"/>
</dbReference>
<dbReference type="NCBIfam" id="NF008979">
    <property type="entry name" value="PRK12325.1"/>
    <property type="match status" value="1"/>
</dbReference>
<dbReference type="NCBIfam" id="TIGR00409">
    <property type="entry name" value="proS_fam_II"/>
    <property type="match status" value="1"/>
</dbReference>
<dbReference type="PANTHER" id="PTHR42753">
    <property type="entry name" value="MITOCHONDRIAL RIBOSOME PROTEIN L39/PROLYL-TRNA LIGASE FAMILY MEMBER"/>
    <property type="match status" value="1"/>
</dbReference>
<dbReference type="PANTHER" id="PTHR42753:SF2">
    <property type="entry name" value="PROLINE--TRNA LIGASE"/>
    <property type="match status" value="1"/>
</dbReference>
<dbReference type="Pfam" id="PF03129">
    <property type="entry name" value="HGTP_anticodon"/>
    <property type="match status" value="1"/>
</dbReference>
<dbReference type="Pfam" id="PF00587">
    <property type="entry name" value="tRNA-synt_2b"/>
    <property type="match status" value="1"/>
</dbReference>
<dbReference type="PRINTS" id="PR01046">
    <property type="entry name" value="TRNASYNTHPRO"/>
</dbReference>
<dbReference type="SUPFAM" id="SSF52954">
    <property type="entry name" value="Class II aaRS ABD-related"/>
    <property type="match status" value="1"/>
</dbReference>
<dbReference type="SUPFAM" id="SSF55681">
    <property type="entry name" value="Class II aaRS and biotin synthetases"/>
    <property type="match status" value="1"/>
</dbReference>
<dbReference type="PROSITE" id="PS50862">
    <property type="entry name" value="AA_TRNA_LIGASE_II"/>
    <property type="match status" value="1"/>
</dbReference>
<comment type="function">
    <text evidence="1">Catalyzes the attachment of proline to tRNA(Pro) in a two-step reaction: proline is first activated by ATP to form Pro-AMP and then transferred to the acceptor end of tRNA(Pro).</text>
</comment>
<comment type="catalytic activity">
    <reaction evidence="1">
        <text>tRNA(Pro) + L-proline + ATP = L-prolyl-tRNA(Pro) + AMP + diphosphate</text>
        <dbReference type="Rhea" id="RHEA:14305"/>
        <dbReference type="Rhea" id="RHEA-COMP:9700"/>
        <dbReference type="Rhea" id="RHEA-COMP:9702"/>
        <dbReference type="ChEBI" id="CHEBI:30616"/>
        <dbReference type="ChEBI" id="CHEBI:33019"/>
        <dbReference type="ChEBI" id="CHEBI:60039"/>
        <dbReference type="ChEBI" id="CHEBI:78442"/>
        <dbReference type="ChEBI" id="CHEBI:78532"/>
        <dbReference type="ChEBI" id="CHEBI:456215"/>
        <dbReference type="EC" id="6.1.1.15"/>
    </reaction>
</comment>
<comment type="subunit">
    <text evidence="1">Homodimer.</text>
</comment>
<comment type="subcellular location">
    <subcellularLocation>
        <location evidence="1">Cytoplasm</location>
    </subcellularLocation>
</comment>
<comment type="similarity">
    <text evidence="1">Belongs to the class-II aminoacyl-tRNA synthetase family. ProS type 2 subfamily.</text>
</comment>
<accession>B2IDI9</accession>
<organism>
    <name type="scientific">Beijerinckia indica subsp. indica (strain ATCC 9039 / DSM 1715 / NCIMB 8712)</name>
    <dbReference type="NCBI Taxonomy" id="395963"/>
    <lineage>
        <taxon>Bacteria</taxon>
        <taxon>Pseudomonadati</taxon>
        <taxon>Pseudomonadota</taxon>
        <taxon>Alphaproteobacteria</taxon>
        <taxon>Hyphomicrobiales</taxon>
        <taxon>Beijerinckiaceae</taxon>
        <taxon>Beijerinckia</taxon>
    </lineage>
</organism>